<organism>
    <name type="scientific">Mycobacterium tuberculosis (strain ATCC 25618 / H37Rv)</name>
    <dbReference type="NCBI Taxonomy" id="83332"/>
    <lineage>
        <taxon>Bacteria</taxon>
        <taxon>Bacillati</taxon>
        <taxon>Actinomycetota</taxon>
        <taxon>Actinomycetes</taxon>
        <taxon>Mycobacteriales</taxon>
        <taxon>Mycobacteriaceae</taxon>
        <taxon>Mycobacterium</taxon>
        <taxon>Mycobacterium tuberculosis complex</taxon>
    </lineage>
</organism>
<name>LPQY_MYCTU</name>
<keyword id="KW-0002">3D-structure</keyword>
<keyword id="KW-0997">Cell inner membrane</keyword>
<keyword id="KW-1003">Cell membrane</keyword>
<keyword id="KW-1015">Disulfide bond</keyword>
<keyword id="KW-0449">Lipoprotein</keyword>
<keyword id="KW-0472">Membrane</keyword>
<keyword id="KW-0564">Palmitate</keyword>
<keyword id="KW-1185">Reference proteome</keyword>
<keyword id="KW-0732">Signal</keyword>
<keyword id="KW-0762">Sugar transport</keyword>
<keyword id="KW-0813">Transport</keyword>
<protein>
    <recommendedName>
        <fullName evidence="6">Trehalose-binding lipoprotein LpqY</fullName>
    </recommendedName>
    <alternativeName>
        <fullName evidence="5">SugABC transporter substrate-binding protein LpqY</fullName>
        <shortName evidence="5">SugABC transporter SBP LpqY</shortName>
    </alternativeName>
</protein>
<comment type="function">
    <text evidence="2 3">Part of the ABC transporter complex LpqY-SugA-SugB-SugC, which is highly specific for uptake of trehalose. Involved in the recycling of extracellular trehalose released from trehalose-containing molecules synthesized by M.tuberculosis. Trehalose uptake is essential for virulence (PubMed:21118978). No binding affinity for maltose (PubMed:35775983).</text>
</comment>
<comment type="subunit">
    <text evidence="3 7">Monomer (PubMed:35775983). The complex is composed of two ATP-binding proteins (SugC), two transmembrane proteins (SugA and SugB) and a solute-binding protein (LpqY) (PubMed:21118978).</text>
</comment>
<comment type="subcellular location">
    <subcellularLocation>
        <location evidence="6">Cell inner membrane</location>
        <topology evidence="1">Lipid-anchor</topology>
        <orientation evidence="3">Periplasmic side</orientation>
    </subcellularLocation>
</comment>
<comment type="disruption phenotype">
    <text evidence="2">Mutants show no growth on trehalose as the sole carbon and energy source, but grow normally on glucose. They secrete substantial amounts of trehalose during growth on glycerol.</text>
</comment>
<comment type="biotechnology">
    <text evidence="8">Being a receptor for trehalose, which is essential for the survival and virulence of M.tuberculosis, this protein is a potential target for antitubercular drug design.</text>
</comment>
<comment type="similarity">
    <text evidence="6">Belongs to the bacterial solute-binding protein 1 family.</text>
</comment>
<sequence length="468" mass="49793">MVMSRGRIPRLGAAVLVALTTAAAACGADSQGLVVSFYTPATDGATFTAIAQRCNQQFGGRFTIAQVSLPRSPNEQRLQLARRLTGNDRTLDVMALDVVWTAEFAEAGWALPLSDDPAGLAENDAVADTLPGPLATAGWNHKLYAAPVTTNTQLLWYRPDLVNSPPTDWNAMIAEAARLHAAGEPSWIAVQANQGEGLVVWFNTLLVSAGGSVLSEDGRHVTLTDTPAHRAATVSALQILKSVATTPGADPSITRTEEGSARLAFEQGKAALEVNWPFVFASMLENAVKGGVPFLPLNRIPQLAGSINDIGTFTPSDEQFRIAYDASQQVFGFAPYPAVAPGQPAKVTIGGLNLAVAKTTRHRAEAFEAVRCLRDQHNQRYVSLEGGLPAVRASLYSDPQFQAKYPMHAIIRQQLTDAAVRPATPVYQALSIRLAAVLSPITEIDPESTADELAAQAQKAIDGMGLLP</sequence>
<dbReference type="EMBL" id="AL123456">
    <property type="protein sequence ID" value="CCP43991.1"/>
    <property type="molecule type" value="Genomic_DNA"/>
</dbReference>
<dbReference type="RefSeq" id="NP_215751.1">
    <property type="nucleotide sequence ID" value="NC_000962.3"/>
</dbReference>
<dbReference type="RefSeq" id="WP_003898783.1">
    <property type="nucleotide sequence ID" value="NZ_NVQJ01000039.1"/>
</dbReference>
<dbReference type="PDB" id="7WCJ">
    <property type="method" value="X-ray"/>
    <property type="resolution" value="2.24 A"/>
    <property type="chains" value="A/B=26-468"/>
</dbReference>
<dbReference type="PDB" id="7WDA">
    <property type="method" value="X-ray"/>
    <property type="resolution" value="1.91 A"/>
    <property type="chains" value="A/B/C/D=26-468"/>
</dbReference>
<dbReference type="PDB" id="8JA7">
    <property type="method" value="EM"/>
    <property type="resolution" value="3.02 A"/>
    <property type="chains" value="E=2-468"/>
</dbReference>
<dbReference type="PDB" id="8JA8">
    <property type="method" value="X-ray"/>
    <property type="resolution" value="1.60 A"/>
    <property type="chains" value="A=2-468"/>
</dbReference>
<dbReference type="PDB" id="8JA9">
    <property type="method" value="X-ray"/>
    <property type="resolution" value="2.10 A"/>
    <property type="chains" value="A=2-468"/>
</dbReference>
<dbReference type="PDB" id="8JAA">
    <property type="method" value="X-ray"/>
    <property type="resolution" value="1.70 A"/>
    <property type="chains" value="A=2-468"/>
</dbReference>
<dbReference type="PDB" id="8JAB">
    <property type="method" value="X-ray"/>
    <property type="resolution" value="1.70 A"/>
    <property type="chains" value="A=2-468"/>
</dbReference>
<dbReference type="PDB" id="8JAC">
    <property type="method" value="X-ray"/>
    <property type="resolution" value="2.10 A"/>
    <property type="chains" value="A=2-468"/>
</dbReference>
<dbReference type="PDB" id="8JAD">
    <property type="method" value="X-ray"/>
    <property type="resolution" value="2.30 A"/>
    <property type="chains" value="A=2-468"/>
</dbReference>
<dbReference type="PDBsum" id="7WCJ"/>
<dbReference type="PDBsum" id="7WDA"/>
<dbReference type="PDBsum" id="8JA7"/>
<dbReference type="PDBsum" id="8JA8"/>
<dbReference type="PDBsum" id="8JA9"/>
<dbReference type="PDBsum" id="8JAA"/>
<dbReference type="PDBsum" id="8JAB"/>
<dbReference type="PDBsum" id="8JAC"/>
<dbReference type="PDBsum" id="8JAD"/>
<dbReference type="EMDB" id="EMD-36125"/>
<dbReference type="SMR" id="P9WGU9"/>
<dbReference type="FunCoup" id="P9WGU9">
    <property type="interactions" value="83"/>
</dbReference>
<dbReference type="STRING" id="83332.Rv1235"/>
<dbReference type="BindingDB" id="P9WGU9"/>
<dbReference type="ChEMBL" id="CHEMBL5169230"/>
<dbReference type="PaxDb" id="83332-Rv1235"/>
<dbReference type="DNASU" id="887145"/>
<dbReference type="GeneID" id="45425205"/>
<dbReference type="GeneID" id="887145"/>
<dbReference type="KEGG" id="mtu:Rv1235"/>
<dbReference type="KEGG" id="mtv:RVBD_1235"/>
<dbReference type="PATRIC" id="fig|83332.111.peg.1380"/>
<dbReference type="TubercuList" id="Rv1235"/>
<dbReference type="eggNOG" id="COG1653">
    <property type="taxonomic scope" value="Bacteria"/>
</dbReference>
<dbReference type="InParanoid" id="P9WGU9"/>
<dbReference type="OrthoDB" id="3495561at2"/>
<dbReference type="PhylomeDB" id="P9WGU9"/>
<dbReference type="BioCyc" id="MetaCyc:G185E-5406-MONOMER"/>
<dbReference type="Proteomes" id="UP000001584">
    <property type="component" value="Chromosome"/>
</dbReference>
<dbReference type="GO" id="GO:0043190">
    <property type="term" value="C:ATP-binding cassette (ABC) transporter complex"/>
    <property type="evidence" value="ECO:0000315"/>
    <property type="project" value="UniProtKB"/>
</dbReference>
<dbReference type="GO" id="GO:0042597">
    <property type="term" value="C:periplasmic space"/>
    <property type="evidence" value="ECO:0000314"/>
    <property type="project" value="UniProtKB"/>
</dbReference>
<dbReference type="GO" id="GO:0005886">
    <property type="term" value="C:plasma membrane"/>
    <property type="evidence" value="ECO:0000305"/>
    <property type="project" value="UniProtKB"/>
</dbReference>
<dbReference type="GO" id="GO:0015574">
    <property type="term" value="F:trehalose transmembrane transporter activity"/>
    <property type="evidence" value="ECO:0000315"/>
    <property type="project" value="UniProtKB"/>
</dbReference>
<dbReference type="GO" id="GO:0051701">
    <property type="term" value="P:biological process involved in interaction with host"/>
    <property type="evidence" value="ECO:0000315"/>
    <property type="project" value="MTBBASE"/>
</dbReference>
<dbReference type="GO" id="GO:0015771">
    <property type="term" value="P:trehalose transport"/>
    <property type="evidence" value="ECO:0000314"/>
    <property type="project" value="MTBBASE"/>
</dbReference>
<dbReference type="FunFam" id="3.40.190.10:FF:000279">
    <property type="entry name" value="PROBABLE SUGAR-BINDING LIPOPROTEIN LPQY"/>
    <property type="match status" value="1"/>
</dbReference>
<dbReference type="Gene3D" id="3.40.190.10">
    <property type="entry name" value="Periplasmic binding protein-like II"/>
    <property type="match status" value="4"/>
</dbReference>
<dbReference type="InterPro" id="IPR006059">
    <property type="entry name" value="SBP"/>
</dbReference>
<dbReference type="PANTHER" id="PTHR30061">
    <property type="entry name" value="MALTOSE-BINDING PERIPLASMIC PROTEIN"/>
    <property type="match status" value="1"/>
</dbReference>
<dbReference type="PANTHER" id="PTHR30061:SF50">
    <property type="entry name" value="MALTOSE_MALTODEXTRIN-BINDING PERIPLASMIC PROTEIN"/>
    <property type="match status" value="1"/>
</dbReference>
<dbReference type="Pfam" id="PF01547">
    <property type="entry name" value="SBP_bac_1"/>
    <property type="match status" value="1"/>
</dbReference>
<dbReference type="SUPFAM" id="SSF53850">
    <property type="entry name" value="Periplasmic binding protein-like II"/>
    <property type="match status" value="1"/>
</dbReference>
<dbReference type="PROSITE" id="PS51257">
    <property type="entry name" value="PROKAR_LIPOPROTEIN"/>
    <property type="match status" value="1"/>
</dbReference>
<proteinExistence type="evidence at protein level"/>
<gene>
    <name evidence="4 5" type="primary">lpqY</name>
    <name type="ordered locus">Rv1235</name>
</gene>
<accession>P9WGU9</accession>
<accession>F2GFS7</accession>
<accession>L0T620</accession>
<accession>Q7ARU8</accession>
<accession>Q7D8J9</accession>
<evidence type="ECO:0000255" key="1">
    <source>
        <dbReference type="PROSITE-ProRule" id="PRU00303"/>
    </source>
</evidence>
<evidence type="ECO:0000269" key="2">
    <source>
    </source>
</evidence>
<evidence type="ECO:0000269" key="3">
    <source>
    </source>
</evidence>
<evidence type="ECO:0000303" key="4">
    <source>
    </source>
</evidence>
<evidence type="ECO:0000303" key="5">
    <source>
    </source>
</evidence>
<evidence type="ECO:0000305" key="6"/>
<evidence type="ECO:0000305" key="7">
    <source>
    </source>
</evidence>
<evidence type="ECO:0000305" key="8">
    <source>
    </source>
</evidence>
<evidence type="ECO:0007744" key="9">
    <source>
        <dbReference type="PDB" id="7WCJ"/>
    </source>
</evidence>
<evidence type="ECO:0007744" key="10">
    <source>
        <dbReference type="PDB" id="7WDA"/>
    </source>
</evidence>
<evidence type="ECO:0007829" key="11">
    <source>
        <dbReference type="PDB" id="7WCJ"/>
    </source>
</evidence>
<evidence type="ECO:0007829" key="12">
    <source>
        <dbReference type="PDB" id="7WDA"/>
    </source>
</evidence>
<evidence type="ECO:0007829" key="13">
    <source>
        <dbReference type="PDB" id="8JA7"/>
    </source>
</evidence>
<evidence type="ECO:0007829" key="14">
    <source>
        <dbReference type="PDB" id="8JA8"/>
    </source>
</evidence>
<evidence type="ECO:0007829" key="15">
    <source>
        <dbReference type="PDB" id="8JAB"/>
    </source>
</evidence>
<evidence type="ECO:0007829" key="16">
    <source>
        <dbReference type="PDB" id="8JAC"/>
    </source>
</evidence>
<feature type="signal peptide" evidence="1">
    <location>
        <begin position="1"/>
        <end position="25"/>
    </location>
</feature>
<feature type="chain" id="PRO_0000419317" description="Trehalose-binding lipoprotein LpqY">
    <location>
        <begin position="26"/>
        <end position="468"/>
    </location>
</feature>
<feature type="binding site" evidence="3 10">
    <location>
        <position position="97"/>
    </location>
    <ligand>
        <name>alpha,alpha-trehalose</name>
        <dbReference type="ChEBI" id="CHEBI:16551"/>
    </ligand>
</feature>
<feature type="binding site" evidence="3 10">
    <location>
        <position position="151"/>
    </location>
    <ligand>
        <name>alpha,alpha-trehalose</name>
        <dbReference type="ChEBI" id="CHEBI:16551"/>
    </ligand>
</feature>
<feature type="binding site" evidence="3 10">
    <location>
        <position position="276"/>
    </location>
    <ligand>
        <name>alpha,alpha-trehalose</name>
        <dbReference type="ChEBI" id="CHEBI:16551"/>
    </ligand>
</feature>
<feature type="binding site" evidence="3 10">
    <location>
        <position position="278"/>
    </location>
    <ligand>
        <name>alpha,alpha-trehalose</name>
        <dbReference type="ChEBI" id="CHEBI:16551"/>
    </ligand>
</feature>
<feature type="binding site" evidence="3 10">
    <location>
        <position position="351"/>
    </location>
    <ligand>
        <name>alpha,alpha-trehalose</name>
        <dbReference type="ChEBI" id="CHEBI:16551"/>
    </ligand>
</feature>
<feature type="binding site" evidence="3 10">
    <location>
        <position position="421"/>
    </location>
    <ligand>
        <name>alpha,alpha-trehalose</name>
        <dbReference type="ChEBI" id="CHEBI:16551"/>
    </ligand>
</feature>
<feature type="lipid moiety-binding region" description="N-palmitoyl cysteine" evidence="1">
    <location>
        <position position="26"/>
    </location>
</feature>
<feature type="lipid moiety-binding region" description="S-diacylglycerol cysteine" evidence="1">
    <location>
        <position position="26"/>
    </location>
</feature>
<feature type="disulfide bond" evidence="3 9 10">
    <location>
        <begin position="54"/>
        <end position="372"/>
    </location>
</feature>
<feature type="strand" evidence="14">
    <location>
        <begin position="33"/>
        <end position="40"/>
    </location>
</feature>
<feature type="helix" evidence="14">
    <location>
        <begin position="41"/>
        <end position="43"/>
    </location>
</feature>
<feature type="helix" evidence="14">
    <location>
        <begin position="44"/>
        <end position="55"/>
    </location>
</feature>
<feature type="turn" evidence="11">
    <location>
        <begin position="57"/>
        <end position="60"/>
    </location>
</feature>
<feature type="strand" evidence="14">
    <location>
        <begin position="61"/>
        <end position="69"/>
    </location>
</feature>
<feature type="helix" evidence="14">
    <location>
        <begin position="73"/>
        <end position="85"/>
    </location>
</feature>
<feature type="strand" evidence="14">
    <location>
        <begin position="93"/>
        <end position="97"/>
    </location>
</feature>
<feature type="helix" evidence="14">
    <location>
        <begin position="98"/>
        <end position="100"/>
    </location>
</feature>
<feature type="helix" evidence="14">
    <location>
        <begin position="101"/>
        <end position="106"/>
    </location>
</feature>
<feature type="helix" evidence="14">
    <location>
        <begin position="113"/>
        <end position="115"/>
    </location>
</feature>
<feature type="helix" evidence="14">
    <location>
        <begin position="121"/>
        <end position="126"/>
    </location>
</feature>
<feature type="strand" evidence="13">
    <location>
        <begin position="127"/>
        <end position="129"/>
    </location>
</feature>
<feature type="helix" evidence="14">
    <location>
        <begin position="131"/>
        <end position="136"/>
    </location>
</feature>
<feature type="strand" evidence="13">
    <location>
        <begin position="139"/>
        <end position="142"/>
    </location>
</feature>
<feature type="strand" evidence="14">
    <location>
        <begin position="145"/>
        <end position="151"/>
    </location>
</feature>
<feature type="strand" evidence="14">
    <location>
        <begin position="154"/>
        <end position="157"/>
    </location>
</feature>
<feature type="turn" evidence="14">
    <location>
        <begin position="159"/>
        <end position="161"/>
    </location>
</feature>
<feature type="strand" evidence="13">
    <location>
        <begin position="162"/>
        <end position="164"/>
    </location>
</feature>
<feature type="helix" evidence="14">
    <location>
        <begin position="169"/>
        <end position="181"/>
    </location>
</feature>
<feature type="strand" evidence="14">
    <location>
        <begin position="188"/>
        <end position="191"/>
    </location>
</feature>
<feature type="strand" evidence="14">
    <location>
        <begin position="193"/>
        <end position="195"/>
    </location>
</feature>
<feature type="helix" evidence="14">
    <location>
        <begin position="196"/>
        <end position="208"/>
    </location>
</feature>
<feature type="strand" evidence="14">
    <location>
        <begin position="218"/>
        <end position="221"/>
    </location>
</feature>
<feature type="strand" evidence="14">
    <location>
        <begin position="223"/>
        <end position="226"/>
    </location>
</feature>
<feature type="helix" evidence="14">
    <location>
        <begin position="227"/>
        <end position="244"/>
    </location>
</feature>
<feature type="helix" evidence="14">
    <location>
        <begin position="251"/>
        <end position="254"/>
    </location>
</feature>
<feature type="strand" evidence="15">
    <location>
        <begin position="255"/>
        <end position="257"/>
    </location>
</feature>
<feature type="helix" evidence="14">
    <location>
        <begin position="261"/>
        <end position="266"/>
    </location>
</feature>
<feature type="strand" evidence="14">
    <location>
        <begin position="271"/>
        <end position="275"/>
    </location>
</feature>
<feature type="helix" evidence="14">
    <location>
        <begin position="278"/>
        <end position="289"/>
    </location>
</feature>
<feature type="helix" evidence="14">
    <location>
        <begin position="297"/>
        <end position="299"/>
    </location>
</feature>
<feature type="helix" evidence="14">
    <location>
        <begin position="301"/>
        <end position="303"/>
    </location>
</feature>
<feature type="helix" evidence="14">
    <location>
        <begin position="317"/>
        <end position="327"/>
    </location>
</feature>
<feature type="turn" evidence="14">
    <location>
        <begin position="328"/>
        <end position="330"/>
    </location>
</feature>
<feature type="strand" evidence="14">
    <location>
        <begin position="332"/>
        <end position="334"/>
    </location>
</feature>
<feature type="strand" evidence="14">
    <location>
        <begin position="338"/>
        <end position="340"/>
    </location>
</feature>
<feature type="strand" evidence="14">
    <location>
        <begin position="350"/>
        <end position="357"/>
    </location>
</feature>
<feature type="helix" evidence="14">
    <location>
        <begin position="363"/>
        <end position="373"/>
    </location>
</feature>
<feature type="helix" evidence="14">
    <location>
        <begin position="376"/>
        <end position="384"/>
    </location>
</feature>
<feature type="helix" evidence="14">
    <location>
        <begin position="393"/>
        <end position="396"/>
    </location>
</feature>
<feature type="helix" evidence="14">
    <location>
        <begin position="399"/>
        <end position="404"/>
    </location>
</feature>
<feature type="helix" evidence="14">
    <location>
        <begin position="408"/>
        <end position="416"/>
    </location>
</feature>
<feature type="strand" evidence="12">
    <location>
        <begin position="417"/>
        <end position="419"/>
    </location>
</feature>
<feature type="helix" evidence="14">
    <location>
        <begin position="427"/>
        <end position="438"/>
    </location>
</feature>
<feature type="helix" evidence="14">
    <location>
        <begin position="441"/>
        <end position="443"/>
    </location>
</feature>
<feature type="helix" evidence="14">
    <location>
        <begin position="446"/>
        <end position="461"/>
    </location>
</feature>
<feature type="turn" evidence="16">
    <location>
        <begin position="462"/>
        <end position="464"/>
    </location>
</feature>
<reference key="1">
    <citation type="journal article" date="1998" name="Nature">
        <title>Deciphering the biology of Mycobacterium tuberculosis from the complete genome sequence.</title>
        <authorList>
            <person name="Cole S.T."/>
            <person name="Brosch R."/>
            <person name="Parkhill J."/>
            <person name="Garnier T."/>
            <person name="Churcher C.M."/>
            <person name="Harris D.E."/>
            <person name="Gordon S.V."/>
            <person name="Eiglmeier K."/>
            <person name="Gas S."/>
            <person name="Barry C.E. III"/>
            <person name="Tekaia F."/>
            <person name="Badcock K."/>
            <person name="Basham D."/>
            <person name="Brown D."/>
            <person name="Chillingworth T."/>
            <person name="Connor R."/>
            <person name="Davies R.M."/>
            <person name="Devlin K."/>
            <person name="Feltwell T."/>
            <person name="Gentles S."/>
            <person name="Hamlin N."/>
            <person name="Holroyd S."/>
            <person name="Hornsby T."/>
            <person name="Jagels K."/>
            <person name="Krogh A."/>
            <person name="McLean J."/>
            <person name="Moule S."/>
            <person name="Murphy L.D."/>
            <person name="Oliver S."/>
            <person name="Osborne J."/>
            <person name="Quail M.A."/>
            <person name="Rajandream M.A."/>
            <person name="Rogers J."/>
            <person name="Rutter S."/>
            <person name="Seeger K."/>
            <person name="Skelton S."/>
            <person name="Squares S."/>
            <person name="Squares R."/>
            <person name="Sulston J.E."/>
            <person name="Taylor K."/>
            <person name="Whitehead S."/>
            <person name="Barrell B.G."/>
        </authorList>
    </citation>
    <scope>NUCLEOTIDE SEQUENCE [LARGE SCALE GENOMIC DNA]</scope>
    <source>
        <strain>ATCC 25618 / H37Rv</strain>
    </source>
</reference>
<reference key="2">
    <citation type="journal article" date="2010" name="Proc. Natl. Acad. Sci. U.S.A.">
        <title>Trehalose-recycling ABC transporter LpqY-SugA-SugB-SugC is essential for virulence of Mycobacterium tuberculosis.</title>
        <authorList>
            <person name="Kalscheuer R."/>
            <person name="Weinrick B."/>
            <person name="Veeraraghavan U."/>
            <person name="Besra G.S."/>
            <person name="Jacobs W.R. Jr."/>
        </authorList>
    </citation>
    <scope>FUNCTION IN TREHALOSE IMPORT</scope>
    <scope>SUBUNIT</scope>
    <scope>DISRUPTION PHENOTYPE</scope>
    <source>
        <strain>ATCC 25618 / H37Rv</strain>
    </source>
</reference>
<reference key="3">
    <citation type="journal article" date="2011" name="Mol. Cell. Proteomics">
        <title>Proteogenomic analysis of Mycobacterium tuberculosis by high resolution mass spectrometry.</title>
        <authorList>
            <person name="Kelkar D.S."/>
            <person name="Kumar D."/>
            <person name="Kumar P."/>
            <person name="Balakrishnan L."/>
            <person name="Muthusamy B."/>
            <person name="Yadav A.K."/>
            <person name="Shrivastava P."/>
            <person name="Marimuthu A."/>
            <person name="Anand S."/>
            <person name="Sundaram H."/>
            <person name="Kingsbury R."/>
            <person name="Harsha H.C."/>
            <person name="Nair B."/>
            <person name="Prasad T.S."/>
            <person name="Chauhan D.S."/>
            <person name="Katoch K."/>
            <person name="Katoch V.M."/>
            <person name="Kumar P."/>
            <person name="Chaerkady R."/>
            <person name="Ramachandran S."/>
            <person name="Dash D."/>
            <person name="Pandey A."/>
        </authorList>
    </citation>
    <scope>IDENTIFICATION BY MASS SPECTROMETRY [LARGE SCALE ANALYSIS]</scope>
    <source>
        <strain>ATCC 25618 / H37Rv</strain>
    </source>
</reference>
<reference key="4">
    <citation type="journal article" date="2022" name="Acta Crystallogr. D Struct. Biol.">
        <title>Structural analysis of LpqY, a substrate-binding protein from the SugABC transporter of Mycobacterium tuberculosis, provides insights into its trehalose specificity.</title>
        <authorList>
            <person name="Sharma D."/>
            <person name="Singh M."/>
            <person name="Kaur P."/>
            <person name="Das U."/>
        </authorList>
    </citation>
    <scope>X-RAY CRYSTALLOGRAPHY (1.9 ANGSTROMS) OF 26-468 AND IN COMPLEX WITH TREHALOSE</scope>
    <scope>FUNCTION</scope>
    <scope>SUBUNIT</scope>
    <scope>SUBCELLULAR LOCATION</scope>
    <scope>BIOTECHNOLOGY</scope>
    <scope>DISULFIDE BOND</scope>
    <scope>CIRCULAR DICHROISM ANALYSIS</scope>
    <source>
        <strain evidence="5">ATCC 25618 / H37Rv</strain>
    </source>
</reference>